<sequence>MSSFFYKEILRMTLRFFTVTDEYIAYLRKFESKVHYQYENNASTYVGVVLKKNDFNYFIPLSSYKKGNPEKDKAMKKRSRIVTRLFEIGNINNPLGYLLHHNMIPVPDSELIPLPLDLKKPKHKMMQKQLIYMKSISEKIENKSEVVYRKAAHEKDGYYLKFSCDFKLLEAKATLYSKKSTFQ</sequence>
<organism>
    <name type="scientific">Lactococcus lactis subsp. lactis</name>
    <name type="common">Streptococcus lactis</name>
    <dbReference type="NCBI Taxonomy" id="1360"/>
    <lineage>
        <taxon>Bacteria</taxon>
        <taxon>Bacillati</taxon>
        <taxon>Bacillota</taxon>
        <taxon>Bacilli</taxon>
        <taxon>Lactobacillales</taxon>
        <taxon>Streptococcaceae</taxon>
        <taxon>Lactococcus</taxon>
    </lineage>
</organism>
<name>ABIQ_LACLL</name>
<protein>
    <recommendedName>
        <fullName evidence="5">Endoribonuclease AbiQ</fullName>
        <shortName evidence="5">ABIQ</shortName>
        <ecNumber>3.1.-.-</ecNumber>
    </recommendedName>
    <alternativeName>
        <fullName evidence="7">Toxin AbiQ</fullName>
    </alternativeName>
</protein>
<reference key="1">
    <citation type="journal article" date="1998" name="Appl. Environ. Microbiol.">
        <title>AbiQ, an abortive infection mechanism from Lactococcus lactis.</title>
        <authorList>
            <person name="Emond E."/>
            <person name="Dion E."/>
            <person name="Walker S.A."/>
            <person name="Vedamuthu E.R."/>
            <person name="Kondo J.K."/>
            <person name="Moineau S."/>
        </authorList>
    </citation>
    <scope>NUCLEOTIDE SEQUENCE [GENOMIC DNA]</scope>
    <scope>FUNCTION</scope>
    <scope>SUBCELLULAR LOCATION</scope>
    <scope>DISRUPTION PHENOTYPE</scope>
    <source>
        <strain>W-37</strain>
        <plasmid>pSRQ900</plasmid>
    </source>
</reference>
<reference key="2">
    <citation type="journal article" date="2001" name="J. Dairy Sci.">
        <title>DNA sequence analysis of three Lactococcus lactis plasmids encoding phage resistance mechanisms.</title>
        <authorList>
            <person name="Boucher I."/>
            <person name="Emond E."/>
            <person name="Parrot M."/>
            <person name="Moineau S."/>
        </authorList>
    </citation>
    <scope>NUCLEOTIDE SEQUENCE [GENOMIC DNA]</scope>
    <source>
        <strain>W-37</strain>
        <plasmid>pSRQ900</plasmid>
    </source>
</reference>
<reference key="3">
    <citation type="journal article" date="2013" name="J. Bacteriol.">
        <title>Effect of the abortive infection mechanism and type III toxin/antitoxin system AbiQ on the lytic cycle of Lactococcus lactis phages.</title>
        <authorList>
            <person name="Samson J.E."/>
            <person name="Belanger M."/>
            <person name="Moineau S."/>
        </authorList>
    </citation>
    <scope>FUNCTION</scope>
</reference>
<reference key="4">
    <citation type="journal article" date="2013" name="Mol. Microbiol.">
        <title>Structure and activity of AbiQ, a lactococcal endoribonuclease belonging to the type III toxin-antitoxin system.</title>
        <authorList>
            <person name="Samson J.E."/>
            <person name="Spinelli S."/>
            <person name="Cambillau C."/>
            <person name="Moineau S."/>
        </authorList>
    </citation>
    <scope>X-RAY CRYSTALLOGRAPHY (2.16 ANGSTROMS) OF 13-183</scope>
    <scope>FUNCTION</scope>
    <scope>INDUCTION</scope>
    <scope>MUTAGENESIS OF TYR-38; PRO-60; SER-62; SER-63; LYS-65; LYS-66; LYS-71; ARG-78 AND ARG-80</scope>
</reference>
<proteinExistence type="evidence at protein level"/>
<geneLocation type="plasmid">
    <name>pSRQ900</name>
</geneLocation>
<comment type="function">
    <text evidence="2 3 4">Toxic component of a type III toxin-antitoxin (TA) system. An endoribonuclease that is probably sequence-specific. It is neutralized by its cognate antitoxin RNA AntiQ, which has 2.8 35 nucleotide-long repeats. Cannot be cloned in L.lactis subsp. cremoris strain NZ9000 in the absence of the antitoxin gene; expression in strain NZ9000 even in the presence of antiQ inhibits growth in a bacteriostatic fashion (PubMed:23279123). Confers resistance to 936 and c2 phages but not P335 phages in L.lactis, causes an abortive infection (Abi phenotype). Viral DNA is replicated but not cleaved from its concatemeric form, while the viral major structural protein is produced normally in the presence of this protein (PubMed:9835558). Operon expression in E.coli confers resistance to 3 phages of the Myoviridae family (T4, RB69 and phage 2) and 1 of the Siphoviridae family (T5), but not other tested phages (T1, T3, lambda vir, HK97, Mu and pilH alpha). The presence of this operon in L.lactis subsp. lactis strain IL1403 during phage P008 infection alters the viral transcription profiles (PubMed:23813728).</text>
</comment>
<comment type="subunit">
    <text evidence="1">Forms a triangular heterohexamer with a single 35-nt-long repeat of RNA antitoxin AntiQ.</text>
</comment>
<comment type="subcellular location">
    <subcellularLocation>
        <location evidence="9">Cytoplasm</location>
    </subcellularLocation>
</comment>
<comment type="induction">
    <text evidence="2">Constitutively expressed in the presence or absence of phage P0008 (in L.lactis subsp. lactis strain IL1403) (at protein level); in the presence of phage the abiQ transcript level decreases while the antiQ transcript does not. Part of the antiQ-abiQ operon.</text>
</comment>
<comment type="disruption phenotype">
    <text evidence="4">Loss of resistance to bacteriophage.</text>
</comment>
<comment type="similarity">
    <text evidence="7">Belongs to the ToxN/AbiQ toxin family.</text>
</comment>
<comment type="caution">
    <text evidence="8">It is uncertain whether Met-1 or Met-12 is the initiator.</text>
</comment>
<feature type="chain" id="PRO_0000432894" description="Endoribonuclease AbiQ">
    <location>
        <begin position="1"/>
        <end position="183"/>
    </location>
</feature>
<feature type="mutagenesis site" description="Loss of resistance of phage P0008, still has RNase activity." evidence="2">
    <original>Y</original>
    <variation>A</variation>
    <variation>C</variation>
    <location>
        <position position="38"/>
    </location>
</feature>
<feature type="mutagenesis site" description="Loss of resistance of phage P0008, slightly decreased RNase activity." evidence="2">
    <original>P</original>
    <variation>L</variation>
    <location>
        <position position="60"/>
    </location>
</feature>
<feature type="mutagenesis site" description="Loss of resistance of phage P0008, loss of RNase activity." evidence="2">
    <original>S</original>
    <variation>L</variation>
    <location>
        <position position="62"/>
    </location>
</feature>
<feature type="mutagenesis site" description="Loss of resistance of phage P0008, still has RNase activity." evidence="2">
    <original>S</original>
    <variation>T</variation>
    <location>
        <position position="62"/>
    </location>
</feature>
<feature type="mutagenesis site" description="Loss of resistance of phage P0008, slightly decreased RNase activity." evidence="2">
    <original>S</original>
    <variation>A</variation>
    <location>
        <position position="63"/>
    </location>
</feature>
<feature type="mutagenesis site" description="Loss of resistance of phage P0008, still has RNase activity." evidence="2">
    <original>K</original>
    <variation>A</variation>
    <location>
        <position position="65"/>
    </location>
</feature>
<feature type="mutagenesis site" description="Wild-type; retains resistance to phage P0008, still has RNase activity." evidence="2">
    <original>K</original>
    <variation>A</variation>
    <location>
        <position position="66"/>
    </location>
</feature>
<feature type="mutagenesis site" description="Loss of resistance of phage P0008, still has RNase activity." evidence="2">
    <original>K</original>
    <variation>A</variation>
    <location>
        <position position="71"/>
    </location>
</feature>
<feature type="mutagenesis site" description="Loss of resistance of phage P0008, decreased RNase activity." evidence="2">
    <original>R</original>
    <variation>E</variation>
    <location>
        <position position="78"/>
    </location>
</feature>
<feature type="mutagenesis site" description="Wild-type; retains resistance to phage P0008, still has RNase activity." evidence="2">
    <original>R</original>
    <variation>E</variation>
    <location>
        <position position="80"/>
    </location>
</feature>
<feature type="strand" evidence="10">
    <location>
        <begin position="15"/>
        <end position="19"/>
    </location>
</feature>
<feature type="helix" evidence="10">
    <location>
        <begin position="21"/>
        <end position="27"/>
    </location>
</feature>
<feature type="turn" evidence="10">
    <location>
        <begin position="28"/>
        <end position="30"/>
    </location>
</feature>
<feature type="strand" evidence="10">
    <location>
        <begin position="44"/>
        <end position="51"/>
    </location>
</feature>
<feature type="strand" evidence="10">
    <location>
        <begin position="53"/>
        <end position="63"/>
    </location>
</feature>
<feature type="helix" evidence="10">
    <location>
        <begin position="69"/>
        <end position="77"/>
    </location>
</feature>
<feature type="turn" evidence="10">
    <location>
        <begin position="78"/>
        <end position="81"/>
    </location>
</feature>
<feature type="strand" evidence="10">
    <location>
        <begin position="82"/>
        <end position="87"/>
    </location>
</feature>
<feature type="strand" evidence="10">
    <location>
        <begin position="90"/>
        <end position="99"/>
    </location>
</feature>
<feature type="helix" evidence="10">
    <location>
        <begin position="100"/>
        <end position="102"/>
    </location>
</feature>
<feature type="helix" evidence="10">
    <location>
        <begin position="108"/>
        <end position="110"/>
    </location>
</feature>
<feature type="strand" evidence="10">
    <location>
        <begin position="111"/>
        <end position="113"/>
    </location>
</feature>
<feature type="helix" evidence="10">
    <location>
        <begin position="121"/>
        <end position="135"/>
    </location>
</feature>
<feature type="helix" evidence="10">
    <location>
        <begin position="137"/>
        <end position="152"/>
    </location>
</feature>
<feature type="helix" evidence="10">
    <location>
        <begin position="157"/>
        <end position="162"/>
    </location>
</feature>
<feature type="helix" evidence="10">
    <location>
        <begin position="166"/>
        <end position="177"/>
    </location>
</feature>
<dbReference type="EC" id="3.1.-.-"/>
<dbReference type="EMBL" id="AF001314">
    <property type="protein sequence ID" value="AAC98713.1"/>
    <property type="molecule type" value="Genomic_DNA"/>
</dbReference>
<dbReference type="RefSeq" id="NP_862552.1">
    <property type="nucleotide sequence ID" value="NC_004959.1"/>
</dbReference>
<dbReference type="PDB" id="4GLK">
    <property type="method" value="X-ray"/>
    <property type="resolution" value="2.16 A"/>
    <property type="chains" value="A=13-183"/>
</dbReference>
<dbReference type="PDBsum" id="4GLK"/>
<dbReference type="SMR" id="Q9ZJ19"/>
<dbReference type="EvolutionaryTrace" id="Q9ZJ19"/>
<dbReference type="GO" id="GO:0005737">
    <property type="term" value="C:cytoplasm"/>
    <property type="evidence" value="ECO:0007669"/>
    <property type="project" value="UniProtKB-SubCell"/>
</dbReference>
<dbReference type="GO" id="GO:0003723">
    <property type="term" value="F:RNA binding"/>
    <property type="evidence" value="ECO:0007669"/>
    <property type="project" value="InterPro"/>
</dbReference>
<dbReference type="GO" id="GO:0004521">
    <property type="term" value="F:RNA endonuclease activity"/>
    <property type="evidence" value="ECO:0000314"/>
    <property type="project" value="CACAO"/>
</dbReference>
<dbReference type="GO" id="GO:0051607">
    <property type="term" value="P:defense response to virus"/>
    <property type="evidence" value="ECO:0007669"/>
    <property type="project" value="UniProtKB-KW"/>
</dbReference>
<dbReference type="Gene3D" id="3.10.129.130">
    <property type="match status" value="1"/>
</dbReference>
<dbReference type="InterPro" id="IPR025911">
    <property type="entry name" value="ToxN/AbiQ_toxin"/>
</dbReference>
<dbReference type="InterPro" id="IPR053735">
    <property type="entry name" value="Type_III_TA_endoRNase"/>
</dbReference>
<dbReference type="Pfam" id="PF13958">
    <property type="entry name" value="ToxN_toxin"/>
    <property type="match status" value="1"/>
</dbReference>
<evidence type="ECO:0000250" key="1">
    <source>
        <dbReference type="UniProtKB" id="B8X8Z0"/>
    </source>
</evidence>
<evidence type="ECO:0000269" key="2">
    <source>
    </source>
</evidence>
<evidence type="ECO:0000269" key="3">
    <source>
    </source>
</evidence>
<evidence type="ECO:0000269" key="4">
    <source>
    </source>
</evidence>
<evidence type="ECO:0000303" key="5">
    <source>
    </source>
</evidence>
<evidence type="ECO:0000303" key="6">
    <source>
    </source>
</evidence>
<evidence type="ECO:0000305" key="7"/>
<evidence type="ECO:0000305" key="8">
    <source>
    </source>
</evidence>
<evidence type="ECO:0000305" key="9">
    <source>
    </source>
</evidence>
<evidence type="ECO:0007829" key="10">
    <source>
        <dbReference type="PDB" id="4GLK"/>
    </source>
</evidence>
<accession>Q9ZJ19</accession>
<keyword id="KW-0002">3D-structure</keyword>
<keyword id="KW-0051">Antiviral defense</keyword>
<keyword id="KW-0963">Cytoplasm</keyword>
<keyword id="KW-0255">Endonuclease</keyword>
<keyword id="KW-0378">Hydrolase</keyword>
<keyword id="KW-0540">Nuclease</keyword>
<keyword id="KW-0614">Plasmid</keyword>
<keyword id="KW-1277">Toxin-antitoxin system</keyword>
<gene>
    <name evidence="6" type="primary">abiQ</name>
</gene>